<evidence type="ECO:0000255" key="1">
    <source>
        <dbReference type="HAMAP-Rule" id="MF_01326"/>
    </source>
</evidence>
<evidence type="ECO:0000305" key="2"/>
<organism>
    <name type="scientific">Rhodopseudomonas palustris (strain BisB18)</name>
    <dbReference type="NCBI Taxonomy" id="316056"/>
    <lineage>
        <taxon>Bacteria</taxon>
        <taxon>Pseudomonadati</taxon>
        <taxon>Pseudomonadota</taxon>
        <taxon>Alphaproteobacteria</taxon>
        <taxon>Hyphomicrobiales</taxon>
        <taxon>Nitrobacteraceae</taxon>
        <taxon>Rhodopseudomonas</taxon>
    </lineage>
</organism>
<accession>Q211F9</accession>
<dbReference type="EMBL" id="CP000301">
    <property type="protein sequence ID" value="ABD88977.1"/>
    <property type="molecule type" value="Genomic_DNA"/>
</dbReference>
<dbReference type="SMR" id="Q211F9"/>
<dbReference type="STRING" id="316056.RPC_3437"/>
<dbReference type="KEGG" id="rpc:RPC_3437"/>
<dbReference type="eggNOG" id="COG0198">
    <property type="taxonomic scope" value="Bacteria"/>
</dbReference>
<dbReference type="HOGENOM" id="CLU_093315_2_2_5"/>
<dbReference type="OrthoDB" id="9807419at2"/>
<dbReference type="GO" id="GO:1990904">
    <property type="term" value="C:ribonucleoprotein complex"/>
    <property type="evidence" value="ECO:0007669"/>
    <property type="project" value="UniProtKB-KW"/>
</dbReference>
<dbReference type="GO" id="GO:0005840">
    <property type="term" value="C:ribosome"/>
    <property type="evidence" value="ECO:0007669"/>
    <property type="project" value="UniProtKB-KW"/>
</dbReference>
<dbReference type="GO" id="GO:0019843">
    <property type="term" value="F:rRNA binding"/>
    <property type="evidence" value="ECO:0007669"/>
    <property type="project" value="UniProtKB-UniRule"/>
</dbReference>
<dbReference type="GO" id="GO:0003735">
    <property type="term" value="F:structural constituent of ribosome"/>
    <property type="evidence" value="ECO:0007669"/>
    <property type="project" value="InterPro"/>
</dbReference>
<dbReference type="GO" id="GO:0006412">
    <property type="term" value="P:translation"/>
    <property type="evidence" value="ECO:0007669"/>
    <property type="project" value="UniProtKB-UniRule"/>
</dbReference>
<dbReference type="CDD" id="cd06089">
    <property type="entry name" value="KOW_RPL26"/>
    <property type="match status" value="1"/>
</dbReference>
<dbReference type="FunFam" id="2.30.30.30:FF:000004">
    <property type="entry name" value="50S ribosomal protein L24"/>
    <property type="match status" value="1"/>
</dbReference>
<dbReference type="Gene3D" id="2.30.30.30">
    <property type="match status" value="1"/>
</dbReference>
<dbReference type="HAMAP" id="MF_01326_B">
    <property type="entry name" value="Ribosomal_uL24_B"/>
    <property type="match status" value="1"/>
</dbReference>
<dbReference type="InterPro" id="IPR005824">
    <property type="entry name" value="KOW"/>
</dbReference>
<dbReference type="InterPro" id="IPR014722">
    <property type="entry name" value="Rib_uL2_dom2"/>
</dbReference>
<dbReference type="InterPro" id="IPR003256">
    <property type="entry name" value="Ribosomal_uL24"/>
</dbReference>
<dbReference type="InterPro" id="IPR005825">
    <property type="entry name" value="Ribosomal_uL24_CS"/>
</dbReference>
<dbReference type="InterPro" id="IPR041988">
    <property type="entry name" value="Ribosomal_uL24_KOW"/>
</dbReference>
<dbReference type="InterPro" id="IPR008991">
    <property type="entry name" value="Translation_prot_SH3-like_sf"/>
</dbReference>
<dbReference type="NCBIfam" id="TIGR01079">
    <property type="entry name" value="rplX_bact"/>
    <property type="match status" value="1"/>
</dbReference>
<dbReference type="PANTHER" id="PTHR12903">
    <property type="entry name" value="MITOCHONDRIAL RIBOSOMAL PROTEIN L24"/>
    <property type="match status" value="1"/>
</dbReference>
<dbReference type="Pfam" id="PF00467">
    <property type="entry name" value="KOW"/>
    <property type="match status" value="1"/>
</dbReference>
<dbReference type="Pfam" id="PF17136">
    <property type="entry name" value="ribosomal_L24"/>
    <property type="match status" value="1"/>
</dbReference>
<dbReference type="SMART" id="SM00739">
    <property type="entry name" value="KOW"/>
    <property type="match status" value="1"/>
</dbReference>
<dbReference type="SUPFAM" id="SSF50104">
    <property type="entry name" value="Translation proteins SH3-like domain"/>
    <property type="match status" value="1"/>
</dbReference>
<dbReference type="PROSITE" id="PS01108">
    <property type="entry name" value="RIBOSOMAL_L24"/>
    <property type="match status" value="1"/>
</dbReference>
<comment type="function">
    <text evidence="1">One of two assembly initiator proteins, it binds directly to the 5'-end of the 23S rRNA, where it nucleates assembly of the 50S subunit.</text>
</comment>
<comment type="function">
    <text evidence="1">One of the proteins that surrounds the polypeptide exit tunnel on the outside of the subunit.</text>
</comment>
<comment type="subunit">
    <text evidence="1">Part of the 50S ribosomal subunit.</text>
</comment>
<comment type="similarity">
    <text evidence="1">Belongs to the universal ribosomal protein uL24 family.</text>
</comment>
<protein>
    <recommendedName>
        <fullName evidence="1">Large ribosomal subunit protein uL24</fullName>
    </recommendedName>
    <alternativeName>
        <fullName evidence="2">50S ribosomal protein L24</fullName>
    </alternativeName>
</protein>
<name>RL24_RHOPB</name>
<keyword id="KW-0687">Ribonucleoprotein</keyword>
<keyword id="KW-0689">Ribosomal protein</keyword>
<keyword id="KW-0694">RNA-binding</keyword>
<keyword id="KW-0699">rRNA-binding</keyword>
<sequence length="104" mass="11253">MAAKIRKGDKVIVLNGRDKGRTGEVFEVRPTENKALVRGVNLVKRHQKQTQAQEGGIISKEAAIHLSNIAIVGKDGKPTRVGFKIQADGKKVRIAKRSGAEIDG</sequence>
<feature type="chain" id="PRO_0000241651" description="Large ribosomal subunit protein uL24">
    <location>
        <begin position="1"/>
        <end position="104"/>
    </location>
</feature>
<proteinExistence type="inferred from homology"/>
<reference key="1">
    <citation type="submission" date="2006-03" db="EMBL/GenBank/DDBJ databases">
        <title>Complete sequence of Rhodopseudomonas palustris BisB18.</title>
        <authorList>
            <consortium name="US DOE Joint Genome Institute"/>
            <person name="Copeland A."/>
            <person name="Lucas S."/>
            <person name="Lapidus A."/>
            <person name="Barry K."/>
            <person name="Detter J.C."/>
            <person name="Glavina del Rio T."/>
            <person name="Hammon N."/>
            <person name="Israni S."/>
            <person name="Dalin E."/>
            <person name="Tice H."/>
            <person name="Pitluck S."/>
            <person name="Chain P."/>
            <person name="Malfatti S."/>
            <person name="Shin M."/>
            <person name="Vergez L."/>
            <person name="Schmutz J."/>
            <person name="Larimer F."/>
            <person name="Land M."/>
            <person name="Hauser L."/>
            <person name="Pelletier D.A."/>
            <person name="Kyrpides N."/>
            <person name="Anderson I."/>
            <person name="Oda Y."/>
            <person name="Harwood C.S."/>
            <person name="Richardson P."/>
        </authorList>
    </citation>
    <scope>NUCLEOTIDE SEQUENCE [LARGE SCALE GENOMIC DNA]</scope>
    <source>
        <strain>BisB18</strain>
    </source>
</reference>
<gene>
    <name evidence="1" type="primary">rplX</name>
    <name type="ordered locus">RPC_3437</name>
</gene>